<protein>
    <recommendedName>
        <fullName evidence="1">2,3-bisphosphoglycerate-dependent phosphoglycerate mutase</fullName>
        <shortName evidence="1">BPG-dependent PGAM</shortName>
        <shortName evidence="1">PGAM</shortName>
        <shortName evidence="1">Phosphoglyceromutase</shortName>
        <shortName evidence="1">dPGM</shortName>
        <ecNumber evidence="1">5.4.2.11</ecNumber>
    </recommendedName>
</protein>
<dbReference type="EC" id="5.4.2.11" evidence="1"/>
<dbReference type="EMBL" id="AM743169">
    <property type="protein sequence ID" value="CAQ44969.1"/>
    <property type="molecule type" value="Genomic_DNA"/>
</dbReference>
<dbReference type="RefSeq" id="WP_012479568.1">
    <property type="nucleotide sequence ID" value="NC_010943.1"/>
</dbReference>
<dbReference type="SMR" id="B2FHH6"/>
<dbReference type="EnsemblBacteria" id="CAQ44969">
    <property type="protein sequence ID" value="CAQ44969"/>
    <property type="gene ID" value="Smlt1430"/>
</dbReference>
<dbReference type="KEGG" id="sml:Smlt1430"/>
<dbReference type="PATRIC" id="fig|522373.3.peg.1368"/>
<dbReference type="eggNOG" id="COG0588">
    <property type="taxonomic scope" value="Bacteria"/>
</dbReference>
<dbReference type="HOGENOM" id="CLU_033323_1_1_6"/>
<dbReference type="UniPathway" id="UPA00109">
    <property type="reaction ID" value="UER00186"/>
</dbReference>
<dbReference type="Proteomes" id="UP000008840">
    <property type="component" value="Chromosome"/>
</dbReference>
<dbReference type="GO" id="GO:0004619">
    <property type="term" value="F:phosphoglycerate mutase activity"/>
    <property type="evidence" value="ECO:0007669"/>
    <property type="project" value="UniProtKB-EC"/>
</dbReference>
<dbReference type="GO" id="GO:0006094">
    <property type="term" value="P:gluconeogenesis"/>
    <property type="evidence" value="ECO:0007669"/>
    <property type="project" value="UniProtKB-UniRule"/>
</dbReference>
<dbReference type="GO" id="GO:0006096">
    <property type="term" value="P:glycolytic process"/>
    <property type="evidence" value="ECO:0007669"/>
    <property type="project" value="UniProtKB-UniRule"/>
</dbReference>
<dbReference type="CDD" id="cd07067">
    <property type="entry name" value="HP_PGM_like"/>
    <property type="match status" value="1"/>
</dbReference>
<dbReference type="FunFam" id="3.40.50.1240:FF:000003">
    <property type="entry name" value="2,3-bisphosphoglycerate-dependent phosphoglycerate mutase"/>
    <property type="match status" value="1"/>
</dbReference>
<dbReference type="Gene3D" id="3.40.50.1240">
    <property type="entry name" value="Phosphoglycerate mutase-like"/>
    <property type="match status" value="1"/>
</dbReference>
<dbReference type="HAMAP" id="MF_01039">
    <property type="entry name" value="PGAM_GpmA"/>
    <property type="match status" value="1"/>
</dbReference>
<dbReference type="InterPro" id="IPR013078">
    <property type="entry name" value="His_Pase_superF_clade-1"/>
</dbReference>
<dbReference type="InterPro" id="IPR029033">
    <property type="entry name" value="His_PPase_superfam"/>
</dbReference>
<dbReference type="InterPro" id="IPR001345">
    <property type="entry name" value="PG/BPGM_mutase_AS"/>
</dbReference>
<dbReference type="InterPro" id="IPR005952">
    <property type="entry name" value="Phosphogly_mut1"/>
</dbReference>
<dbReference type="NCBIfam" id="TIGR01258">
    <property type="entry name" value="pgm_1"/>
    <property type="match status" value="1"/>
</dbReference>
<dbReference type="NCBIfam" id="NF010713">
    <property type="entry name" value="PRK14115.1"/>
    <property type="match status" value="1"/>
</dbReference>
<dbReference type="PANTHER" id="PTHR11931">
    <property type="entry name" value="PHOSPHOGLYCERATE MUTASE"/>
    <property type="match status" value="1"/>
</dbReference>
<dbReference type="Pfam" id="PF00300">
    <property type="entry name" value="His_Phos_1"/>
    <property type="match status" value="2"/>
</dbReference>
<dbReference type="PIRSF" id="PIRSF000709">
    <property type="entry name" value="6PFK_2-Ptase"/>
    <property type="match status" value="1"/>
</dbReference>
<dbReference type="SMART" id="SM00855">
    <property type="entry name" value="PGAM"/>
    <property type="match status" value="1"/>
</dbReference>
<dbReference type="SUPFAM" id="SSF53254">
    <property type="entry name" value="Phosphoglycerate mutase-like"/>
    <property type="match status" value="1"/>
</dbReference>
<dbReference type="PROSITE" id="PS00175">
    <property type="entry name" value="PG_MUTASE"/>
    <property type="match status" value="1"/>
</dbReference>
<sequence>MTRKLVLLRHGQSQWNLDNRFTGWVDVDLTEQGRREAAAAGRLMREEGLQFDVAHTSVLKRAIHTLQGALAELEQDWLPANKSWRLNERHYGGLQGLDKAETAAKHGEEQVKVWRRSYDIPPPPMELEDPGHPIHDRRYAGLDRNALPGTESLATTLDRVLPYWHDAIAPQLKDGKTVLVTAHGNSLRALYKYLNNVSREEILELNIPTGIPLLFELNDDLTVQSFRYLGDPEAARKAAEAVANQGKAK</sequence>
<feature type="chain" id="PRO_1000135982" description="2,3-bisphosphoglycerate-dependent phosphoglycerate mutase">
    <location>
        <begin position="1"/>
        <end position="249"/>
    </location>
</feature>
<feature type="active site" description="Tele-phosphohistidine intermediate" evidence="1">
    <location>
        <position position="10"/>
    </location>
</feature>
<feature type="active site" description="Proton donor/acceptor" evidence="1">
    <location>
        <position position="88"/>
    </location>
</feature>
<feature type="binding site" evidence="1">
    <location>
        <begin position="9"/>
        <end position="16"/>
    </location>
    <ligand>
        <name>substrate</name>
    </ligand>
</feature>
<feature type="binding site" evidence="1">
    <location>
        <begin position="22"/>
        <end position="23"/>
    </location>
    <ligand>
        <name>substrate</name>
    </ligand>
</feature>
<feature type="binding site" evidence="1">
    <location>
        <position position="61"/>
    </location>
    <ligand>
        <name>substrate</name>
    </ligand>
</feature>
<feature type="binding site" evidence="1">
    <location>
        <begin position="88"/>
        <end position="91"/>
    </location>
    <ligand>
        <name>substrate</name>
    </ligand>
</feature>
<feature type="binding site" evidence="1">
    <location>
        <position position="99"/>
    </location>
    <ligand>
        <name>substrate</name>
    </ligand>
</feature>
<feature type="binding site" evidence="1">
    <location>
        <begin position="115"/>
        <end position="116"/>
    </location>
    <ligand>
        <name>substrate</name>
    </ligand>
</feature>
<feature type="binding site" evidence="1">
    <location>
        <begin position="184"/>
        <end position="185"/>
    </location>
    <ligand>
        <name>substrate</name>
    </ligand>
</feature>
<feature type="site" description="Transition state stabilizer" evidence="1">
    <location>
        <position position="183"/>
    </location>
</feature>
<accession>B2FHH6</accession>
<evidence type="ECO:0000255" key="1">
    <source>
        <dbReference type="HAMAP-Rule" id="MF_01039"/>
    </source>
</evidence>
<keyword id="KW-0312">Gluconeogenesis</keyword>
<keyword id="KW-0324">Glycolysis</keyword>
<keyword id="KW-0413">Isomerase</keyword>
<keyword id="KW-1185">Reference proteome</keyword>
<name>GPMA_STRMK</name>
<organism>
    <name type="scientific">Stenotrophomonas maltophilia (strain K279a)</name>
    <dbReference type="NCBI Taxonomy" id="522373"/>
    <lineage>
        <taxon>Bacteria</taxon>
        <taxon>Pseudomonadati</taxon>
        <taxon>Pseudomonadota</taxon>
        <taxon>Gammaproteobacteria</taxon>
        <taxon>Lysobacterales</taxon>
        <taxon>Lysobacteraceae</taxon>
        <taxon>Stenotrophomonas</taxon>
        <taxon>Stenotrophomonas maltophilia group</taxon>
    </lineage>
</organism>
<comment type="function">
    <text evidence="1">Catalyzes the interconversion of 2-phosphoglycerate and 3-phosphoglycerate.</text>
</comment>
<comment type="catalytic activity">
    <reaction evidence="1">
        <text>(2R)-2-phosphoglycerate = (2R)-3-phosphoglycerate</text>
        <dbReference type="Rhea" id="RHEA:15901"/>
        <dbReference type="ChEBI" id="CHEBI:58272"/>
        <dbReference type="ChEBI" id="CHEBI:58289"/>
        <dbReference type="EC" id="5.4.2.11"/>
    </reaction>
</comment>
<comment type="pathway">
    <text evidence="1">Carbohydrate degradation; glycolysis; pyruvate from D-glyceraldehyde 3-phosphate: step 3/5.</text>
</comment>
<comment type="subunit">
    <text evidence="1">Homodimer.</text>
</comment>
<comment type="similarity">
    <text evidence="1">Belongs to the phosphoglycerate mutase family. BPG-dependent PGAM subfamily.</text>
</comment>
<gene>
    <name evidence="1" type="primary">gpmA</name>
    <name type="ordered locus">Smlt1430</name>
</gene>
<reference key="1">
    <citation type="journal article" date="2008" name="Genome Biol.">
        <title>The complete genome, comparative and functional analysis of Stenotrophomonas maltophilia reveals an organism heavily shielded by drug resistance determinants.</title>
        <authorList>
            <person name="Crossman L.C."/>
            <person name="Gould V.C."/>
            <person name="Dow J.M."/>
            <person name="Vernikos G.S."/>
            <person name="Okazaki A."/>
            <person name="Sebaihia M."/>
            <person name="Saunders D."/>
            <person name="Arrowsmith C."/>
            <person name="Carver T."/>
            <person name="Peters N."/>
            <person name="Adlem E."/>
            <person name="Kerhornou A."/>
            <person name="Lord A."/>
            <person name="Murphy L."/>
            <person name="Seeger K."/>
            <person name="Squares R."/>
            <person name="Rutter S."/>
            <person name="Quail M.A."/>
            <person name="Rajandream M.A."/>
            <person name="Harris D."/>
            <person name="Churcher C."/>
            <person name="Bentley S.D."/>
            <person name="Parkhill J."/>
            <person name="Thomson N.R."/>
            <person name="Avison M.B."/>
        </authorList>
    </citation>
    <scope>NUCLEOTIDE SEQUENCE [LARGE SCALE GENOMIC DNA]</scope>
    <source>
        <strain>K279a</strain>
    </source>
</reference>
<proteinExistence type="inferred from homology"/>